<accession>Q6GFF9</accession>
<name>DAGK_STAAR</name>
<organism>
    <name type="scientific">Staphylococcus aureus (strain MRSA252)</name>
    <dbReference type="NCBI Taxonomy" id="282458"/>
    <lineage>
        <taxon>Bacteria</taxon>
        <taxon>Bacillati</taxon>
        <taxon>Bacillota</taxon>
        <taxon>Bacilli</taxon>
        <taxon>Bacillales</taxon>
        <taxon>Staphylococcaceae</taxon>
        <taxon>Staphylococcus</taxon>
    </lineage>
</organism>
<evidence type="ECO:0000255" key="1">
    <source>
        <dbReference type="PROSITE-ProRule" id="PRU00783"/>
    </source>
</evidence>
<evidence type="ECO:0000269" key="2">
    <source>
    </source>
</evidence>
<evidence type="ECO:0000269" key="3">
    <source>
    </source>
</evidence>
<evidence type="ECO:0000305" key="4"/>
<evidence type="ECO:0007744" key="5">
    <source>
        <dbReference type="PDB" id="2QV7"/>
    </source>
</evidence>
<evidence type="ECO:0007744" key="6">
    <source>
        <dbReference type="PDB" id="2QVL"/>
    </source>
</evidence>
<evidence type="ECO:0007829" key="7">
    <source>
        <dbReference type="PDB" id="2QV7"/>
    </source>
</evidence>
<evidence type="ECO:0007829" key="8">
    <source>
        <dbReference type="PDB" id="2QVL"/>
    </source>
</evidence>
<feature type="chain" id="PRO_0000386495" description="Diacylglycerol kinase">
    <location>
        <begin position="1"/>
        <end position="315"/>
    </location>
</feature>
<feature type="domain" description="DAGKc" evidence="1">
    <location>
        <begin position="1"/>
        <end position="132"/>
    </location>
</feature>
<feature type="active site" description="Proton acceptor" evidence="3">
    <location>
        <position position="273"/>
    </location>
</feature>
<feature type="binding site" evidence="3">
    <location>
        <begin position="10"/>
        <end position="14"/>
    </location>
    <ligand>
        <name>ATP</name>
        <dbReference type="ChEBI" id="CHEBI:30616"/>
    </ligand>
</feature>
<feature type="binding site" evidence="3">
    <location>
        <position position="41"/>
    </location>
    <ligand>
        <name>ATP</name>
        <dbReference type="ChEBI" id="CHEBI:30616"/>
    </ligand>
</feature>
<feature type="binding site" evidence="3">
    <location>
        <begin position="67"/>
        <end position="73"/>
    </location>
    <ligand>
        <name>ATP</name>
        <dbReference type="ChEBI" id="CHEBI:30616"/>
    </ligand>
</feature>
<feature type="binding site" evidence="3">
    <location>
        <position position="94"/>
    </location>
    <ligand>
        <name>ATP</name>
        <dbReference type="ChEBI" id="CHEBI:30616"/>
    </ligand>
</feature>
<feature type="binding site" evidence="3">
    <location>
        <position position="213"/>
    </location>
    <ligand>
        <name>Mg(2+)</name>
        <dbReference type="ChEBI" id="CHEBI:18420"/>
    </ligand>
</feature>
<feature type="binding site" evidence="3">
    <location>
        <position position="216"/>
    </location>
    <ligand>
        <name>Mg(2+)</name>
        <dbReference type="ChEBI" id="CHEBI:18420"/>
    </ligand>
</feature>
<feature type="binding site" evidence="3">
    <location>
        <position position="218"/>
    </location>
    <ligand>
        <name>Mg(2+)</name>
        <dbReference type="ChEBI" id="CHEBI:18420"/>
    </ligand>
</feature>
<feature type="mutagenesis site" description="Loss of activity." evidence="3">
    <original>D</original>
    <variation>A</variation>
    <location>
        <position position="68"/>
    </location>
</feature>
<feature type="mutagenesis site" description="Loss of activity." evidence="3">
    <original>P</original>
    <variation>A</variation>
    <location>
        <position position="91"/>
    </location>
</feature>
<feature type="mutagenesis site" description="Loss of activity." evidence="3">
    <original>T</original>
    <variation>A</variation>
    <location>
        <position position="94"/>
    </location>
</feature>
<feature type="mutagenesis site" description="Loss of activity." evidence="3">
    <original>N</original>
    <variation>A</variation>
    <location>
        <position position="96"/>
    </location>
</feature>
<feature type="mutagenesis site" description="Loss of activity." evidence="3">
    <original>D</original>
    <variation>A</variation>
    <location>
        <position position="97"/>
    </location>
</feature>
<feature type="mutagenesis site" description="Loss of activity." evidence="3">
    <original>D</original>
    <variation>A</variation>
    <location>
        <position position="124"/>
    </location>
</feature>
<feature type="mutagenesis site" description="No effect on activity." evidence="3">
    <original>E</original>
    <variation>A</variation>
    <location>
        <position position="168"/>
    </location>
</feature>
<feature type="mutagenesis site" description="5-fold decrease in activity." evidence="3">
    <original>D</original>
    <variation>A</variation>
    <location>
        <position position="216"/>
    </location>
</feature>
<feature type="mutagenesis site" description="Loss of activity." evidence="3">
    <original>D</original>
    <variation>A</variation>
    <location>
        <position position="271"/>
    </location>
</feature>
<feature type="mutagenesis site" description="Loss of activity." evidence="3">
    <original>E</original>
    <variation>A</variation>
    <location>
        <position position="273"/>
    </location>
</feature>
<feature type="strand" evidence="7">
    <location>
        <begin position="3"/>
        <end position="9"/>
    </location>
</feature>
<feature type="helix" evidence="7">
    <location>
        <begin position="18"/>
        <end position="31"/>
    </location>
</feature>
<feature type="strand" evidence="7">
    <location>
        <begin position="34"/>
        <end position="40"/>
    </location>
</feature>
<feature type="helix" evidence="7">
    <location>
        <begin position="46"/>
        <end position="54"/>
    </location>
</feature>
<feature type="turn" evidence="7">
    <location>
        <begin position="55"/>
        <end position="58"/>
    </location>
</feature>
<feature type="strand" evidence="7">
    <location>
        <begin position="60"/>
        <end position="66"/>
    </location>
</feature>
<feature type="helix" evidence="7">
    <location>
        <begin position="68"/>
        <end position="78"/>
    </location>
</feature>
<feature type="strand" evidence="7">
    <location>
        <begin position="86"/>
        <end position="91"/>
    </location>
</feature>
<feature type="helix" evidence="7">
    <location>
        <begin position="97"/>
        <end position="101"/>
    </location>
</feature>
<feature type="helix" evidence="7">
    <location>
        <begin position="108"/>
        <end position="117"/>
    </location>
</feature>
<feature type="strand" evidence="7">
    <location>
        <begin position="120"/>
        <end position="128"/>
    </location>
</feature>
<feature type="strand" evidence="7">
    <location>
        <begin position="131"/>
        <end position="140"/>
    </location>
</feature>
<feature type="helix" evidence="7">
    <location>
        <begin position="159"/>
        <end position="161"/>
    </location>
</feature>
<feature type="turn" evidence="7">
    <location>
        <begin position="166"/>
        <end position="169"/>
    </location>
</feature>
<feature type="helix" evidence="7">
    <location>
        <begin position="170"/>
        <end position="172"/>
    </location>
</feature>
<feature type="strand" evidence="7">
    <location>
        <begin position="176"/>
        <end position="182"/>
    </location>
</feature>
<feature type="strand" evidence="7">
    <location>
        <begin position="185"/>
        <end position="199"/>
    </location>
</feature>
<feature type="strand" evidence="7">
    <location>
        <begin position="214"/>
        <end position="217"/>
    </location>
</feature>
<feature type="strand" evidence="7">
    <location>
        <begin position="219"/>
        <end position="225"/>
    </location>
</feature>
<feature type="helix" evidence="7">
    <location>
        <begin position="229"/>
        <end position="239"/>
    </location>
</feature>
<feature type="turn" evidence="7">
    <location>
        <begin position="240"/>
        <end position="242"/>
    </location>
</feature>
<feature type="helix" evidence="7">
    <location>
        <begin position="244"/>
        <end position="246"/>
    </location>
</feature>
<feature type="strand" evidence="7">
    <location>
        <begin position="250"/>
        <end position="261"/>
    </location>
</feature>
<feature type="strand" evidence="7">
    <location>
        <begin position="267"/>
        <end position="270"/>
    </location>
</feature>
<feature type="strand" evidence="7">
    <location>
        <begin position="273"/>
        <end position="278"/>
    </location>
</feature>
<feature type="strand" evidence="7">
    <location>
        <begin position="280"/>
        <end position="292"/>
    </location>
</feature>
<feature type="strand" evidence="8">
    <location>
        <begin position="295"/>
        <end position="297"/>
    </location>
</feature>
<reference key="1">
    <citation type="journal article" date="2004" name="Proc. Natl. Acad. Sci. U.S.A.">
        <title>Complete genomes of two clinical Staphylococcus aureus strains: evidence for the rapid evolution of virulence and drug resistance.</title>
        <authorList>
            <person name="Holden M.T.G."/>
            <person name="Feil E.J."/>
            <person name="Lindsay J.A."/>
            <person name="Peacock S.J."/>
            <person name="Day N.P.J."/>
            <person name="Enright M.C."/>
            <person name="Foster T.J."/>
            <person name="Moore C.E."/>
            <person name="Hurst L."/>
            <person name="Atkin R."/>
            <person name="Barron A."/>
            <person name="Bason N."/>
            <person name="Bentley S.D."/>
            <person name="Chillingworth C."/>
            <person name="Chillingworth T."/>
            <person name="Churcher C."/>
            <person name="Clark L."/>
            <person name="Corton C."/>
            <person name="Cronin A."/>
            <person name="Doggett J."/>
            <person name="Dowd L."/>
            <person name="Feltwell T."/>
            <person name="Hance Z."/>
            <person name="Harris B."/>
            <person name="Hauser H."/>
            <person name="Holroyd S."/>
            <person name="Jagels K."/>
            <person name="James K.D."/>
            <person name="Lennard N."/>
            <person name="Line A."/>
            <person name="Mayes R."/>
            <person name="Moule S."/>
            <person name="Mungall K."/>
            <person name="Ormond D."/>
            <person name="Quail M.A."/>
            <person name="Rabbinowitsch E."/>
            <person name="Rutherford K.M."/>
            <person name="Sanders M."/>
            <person name="Sharp S."/>
            <person name="Simmonds M."/>
            <person name="Stevens K."/>
            <person name="Whitehead S."/>
            <person name="Barrell B.G."/>
            <person name="Spratt B.G."/>
            <person name="Parkhill J."/>
        </authorList>
    </citation>
    <scope>NUCLEOTIDE SEQUENCE [LARGE SCALE GENOMIC DNA]</scope>
    <source>
        <strain>MRSA252</strain>
    </source>
</reference>
<reference key="2">
    <citation type="journal article" date="2007" name="J. Biol. Chem.">
        <title>Identification of a soluble diacylglycerol kinase required for lipoteichoic acid production in Bacillus subtilis.</title>
        <authorList>
            <person name="Jerga A."/>
            <person name="Lu Y.-J."/>
            <person name="Schujman G.E."/>
            <person name="de Mendoza D."/>
            <person name="Rock C.O."/>
        </authorList>
    </citation>
    <scope>FUNCTION AS A DIACYLGLYCEROL KINASE</scope>
</reference>
<reference evidence="5 6" key="3">
    <citation type="journal article" date="2008" name="Structure">
        <title>Analysis of the Staphylococcus aureus DgkB structure reveals a common catalytic mechanism for the soluble diacylglycerol kinases.</title>
        <authorList>
            <person name="Miller D.J."/>
            <person name="Jerga A."/>
            <person name="Rock C.O."/>
            <person name="White S.W."/>
        </authorList>
    </citation>
    <scope>X-RAY CRYSTALLOGRAPHY (2.3 ANGSTROMS) OF APOENZYME AND IN COMPLEX WITH ADP AND MAGNESIUM</scope>
    <scope>SUBUNIT</scope>
    <scope>COFACTOR</scope>
    <scope>MUTAGENESIS OF ASP-68; PRO-91; THR-94; ASN-96; ASP-97; ASP-124; GLU-168; ASP-216; ASP-271 AND GLU-273</scope>
    <scope>ACTIVE SITE</scope>
    <scope>REACTION MECHANISM</scope>
</reference>
<proteinExistence type="evidence at protein level"/>
<sequence>MRKRARIIYNPTSGKEQFKRELPDALIKLEKAGYETSAYATEKIGDATLEAERAMHENYDVLIAAGGDGTLNEVVNGIAEKPNRPKLGVIPMGTVNDFGRALHIPNDIMGALDVIIEGHSTKVDIGKMNNRYFINLAAGGQLTQVSYETPSKLKSIVGPFAYYIKGFEMLPQMKAVDLRIEYDGNVFQGEALLFFLGLTNSMAGFEKLVPDAKLDDGYFTLIIVEKSNLAELGHIMTLASRGEHTKHPKVIYEKAKAINISSFTDLQLNVDGEYGGKLPANFLNLERHIDVFAPNDIVNEELINNDHVDDNLIEE</sequence>
<comment type="function">
    <text evidence="2">Catalyzes the phosphorylation of diacylglycerol (DAG) into phosphatidic acid. Is a key enzyme involved in the production of lipoteichoic acid by reintroducing DAG formed from the breakdown of membrane phospholipids into the phosphatidylglycerol biosynthetic pathway.</text>
</comment>
<comment type="catalytic activity">
    <reaction evidence="3">
        <text>a 1,2-diacyl-sn-glycerol + ATP = a 1,2-diacyl-sn-glycero-3-phosphate + ADP + H(+)</text>
        <dbReference type="Rhea" id="RHEA:10272"/>
        <dbReference type="ChEBI" id="CHEBI:15378"/>
        <dbReference type="ChEBI" id="CHEBI:17815"/>
        <dbReference type="ChEBI" id="CHEBI:30616"/>
        <dbReference type="ChEBI" id="CHEBI:58608"/>
        <dbReference type="ChEBI" id="CHEBI:456216"/>
        <dbReference type="EC" id="2.7.1.107"/>
    </reaction>
</comment>
<comment type="cofactor">
    <cofactor evidence="3">
        <name>Mg(2+)</name>
        <dbReference type="ChEBI" id="CHEBI:18420"/>
    </cofactor>
    <text evidence="3">Binds 1 Mg(2+) ion per subunit. This ion appears to have a structural role and is required for catalytic activity.</text>
</comment>
<comment type="subunit">
    <text evidence="3">Homodimer.</text>
</comment>
<comment type="interaction">
    <interactant intactId="EBI-15714341">
        <id>Q6GFF9</id>
    </interactant>
    <interactant intactId="EBI-15714341">
        <id>Q6GFF9</id>
        <label>dagK</label>
    </interactant>
    <organismsDiffer>false</organismsDiffer>
    <experiments>2</experiments>
</comment>
<comment type="similarity">
    <text evidence="4">Belongs to the diacylglycerol/lipid kinase family.</text>
</comment>
<gene>
    <name type="primary">dagK</name>
    <name type="synonym">dgkB</name>
    <name type="ordered locus">SAR1989</name>
</gene>
<keyword id="KW-0002">3D-structure</keyword>
<keyword id="KW-0067">ATP-binding</keyword>
<keyword id="KW-0418">Kinase</keyword>
<keyword id="KW-0444">Lipid biosynthesis</keyword>
<keyword id="KW-0443">Lipid metabolism</keyword>
<keyword id="KW-0460">Magnesium</keyword>
<keyword id="KW-0479">Metal-binding</keyword>
<keyword id="KW-0547">Nucleotide-binding</keyword>
<keyword id="KW-0594">Phospholipid biosynthesis</keyword>
<keyword id="KW-1208">Phospholipid metabolism</keyword>
<keyword id="KW-0808">Transferase</keyword>
<protein>
    <recommendedName>
        <fullName>Diacylglycerol kinase</fullName>
        <shortName>DAG kinase</shortName>
        <shortName>DAGK</shortName>
        <ecNumber evidence="3">2.7.1.107</ecNumber>
    </recommendedName>
</protein>
<dbReference type="EC" id="2.7.1.107" evidence="3"/>
<dbReference type="EMBL" id="BX571856">
    <property type="protein sequence ID" value="CAG40975.1"/>
    <property type="molecule type" value="Genomic_DNA"/>
</dbReference>
<dbReference type="RefSeq" id="WP_001231458.1">
    <property type="nucleotide sequence ID" value="NC_002952.2"/>
</dbReference>
<dbReference type="PDB" id="2QV7">
    <property type="method" value="X-ray"/>
    <property type="resolution" value="2.30 A"/>
    <property type="chains" value="A=1-315"/>
</dbReference>
<dbReference type="PDB" id="2QVL">
    <property type="method" value="X-ray"/>
    <property type="resolution" value="2.40 A"/>
    <property type="chains" value="A=1-315"/>
</dbReference>
<dbReference type="PDBsum" id="2QV7"/>
<dbReference type="PDBsum" id="2QVL"/>
<dbReference type="SMR" id="Q6GFF9"/>
<dbReference type="DIP" id="DIP-46022N"/>
<dbReference type="KEGG" id="sar:SAR1989"/>
<dbReference type="HOGENOM" id="CLU_045532_1_0_9"/>
<dbReference type="BioCyc" id="MetaCyc:MONOMER-20007"/>
<dbReference type="BRENDA" id="2.7.1.107">
    <property type="organism ID" value="3352"/>
</dbReference>
<dbReference type="EvolutionaryTrace" id="Q6GFF9"/>
<dbReference type="Proteomes" id="UP000000596">
    <property type="component" value="Chromosome"/>
</dbReference>
<dbReference type="GO" id="GO:0005886">
    <property type="term" value="C:plasma membrane"/>
    <property type="evidence" value="ECO:0007669"/>
    <property type="project" value="TreeGrafter"/>
</dbReference>
<dbReference type="GO" id="GO:0005524">
    <property type="term" value="F:ATP binding"/>
    <property type="evidence" value="ECO:0007669"/>
    <property type="project" value="UniProtKB-KW"/>
</dbReference>
<dbReference type="GO" id="GO:0004143">
    <property type="term" value="F:ATP-dependent diacylglycerol kinase activity"/>
    <property type="evidence" value="ECO:0007669"/>
    <property type="project" value="UniProtKB-EC"/>
</dbReference>
<dbReference type="GO" id="GO:0042802">
    <property type="term" value="F:identical protein binding"/>
    <property type="evidence" value="ECO:0000353"/>
    <property type="project" value="IntAct"/>
</dbReference>
<dbReference type="GO" id="GO:0046872">
    <property type="term" value="F:metal ion binding"/>
    <property type="evidence" value="ECO:0007669"/>
    <property type="project" value="UniProtKB-KW"/>
</dbReference>
<dbReference type="GO" id="GO:0008654">
    <property type="term" value="P:phospholipid biosynthetic process"/>
    <property type="evidence" value="ECO:0007669"/>
    <property type="project" value="UniProtKB-KW"/>
</dbReference>
<dbReference type="FunFam" id="2.60.200.40:FF:000015">
    <property type="entry name" value="Diacylglycerol kinase"/>
    <property type="match status" value="1"/>
</dbReference>
<dbReference type="FunFam" id="3.40.50.10330:FF:000008">
    <property type="entry name" value="Probable lipid kinase YegS"/>
    <property type="match status" value="1"/>
</dbReference>
<dbReference type="Gene3D" id="2.60.200.40">
    <property type="match status" value="1"/>
</dbReference>
<dbReference type="Gene3D" id="3.40.50.10330">
    <property type="entry name" value="Probable inorganic polyphosphate/atp-NAD kinase, domain 1"/>
    <property type="match status" value="1"/>
</dbReference>
<dbReference type="InterPro" id="IPR017438">
    <property type="entry name" value="ATP-NAD_kinase_N"/>
</dbReference>
<dbReference type="InterPro" id="IPR005218">
    <property type="entry name" value="Diacylglycerol/lipid_kinase"/>
</dbReference>
<dbReference type="InterPro" id="IPR001206">
    <property type="entry name" value="Diacylglycerol_kinase_cat_dom"/>
</dbReference>
<dbReference type="InterPro" id="IPR050187">
    <property type="entry name" value="Lipid_Phosphate_FormReg"/>
</dbReference>
<dbReference type="InterPro" id="IPR016064">
    <property type="entry name" value="NAD/diacylglycerol_kinase_sf"/>
</dbReference>
<dbReference type="InterPro" id="IPR045540">
    <property type="entry name" value="YegS/DAGK_C"/>
</dbReference>
<dbReference type="NCBIfam" id="NF009603">
    <property type="entry name" value="PRK13055.1"/>
    <property type="match status" value="1"/>
</dbReference>
<dbReference type="NCBIfam" id="NF009874">
    <property type="entry name" value="PRK13337.1"/>
    <property type="match status" value="1"/>
</dbReference>
<dbReference type="NCBIfam" id="TIGR00147">
    <property type="entry name" value="YegS/Rv2252/BmrU family lipid kinase"/>
    <property type="match status" value="1"/>
</dbReference>
<dbReference type="PANTHER" id="PTHR12358:SF106">
    <property type="entry name" value="LIPID KINASE YEGS"/>
    <property type="match status" value="1"/>
</dbReference>
<dbReference type="PANTHER" id="PTHR12358">
    <property type="entry name" value="SPHINGOSINE KINASE"/>
    <property type="match status" value="1"/>
</dbReference>
<dbReference type="Pfam" id="PF00781">
    <property type="entry name" value="DAGK_cat"/>
    <property type="match status" value="1"/>
</dbReference>
<dbReference type="Pfam" id="PF19279">
    <property type="entry name" value="YegS_C"/>
    <property type="match status" value="1"/>
</dbReference>
<dbReference type="SMART" id="SM00046">
    <property type="entry name" value="DAGKc"/>
    <property type="match status" value="1"/>
</dbReference>
<dbReference type="SUPFAM" id="SSF111331">
    <property type="entry name" value="NAD kinase/diacylglycerol kinase-like"/>
    <property type="match status" value="1"/>
</dbReference>
<dbReference type="PROSITE" id="PS50146">
    <property type="entry name" value="DAGK"/>
    <property type="match status" value="1"/>
</dbReference>